<reference key="1">
    <citation type="journal article" date="2007" name="ISME J.">
        <title>Population level functional diversity in a microbial community revealed by comparative genomic and metagenomic analyses.</title>
        <authorList>
            <person name="Bhaya D."/>
            <person name="Grossman A.R."/>
            <person name="Steunou A.-S."/>
            <person name="Khuri N."/>
            <person name="Cohan F.M."/>
            <person name="Hamamura N."/>
            <person name="Melendrez M.C."/>
            <person name="Bateson M.M."/>
            <person name="Ward D.M."/>
            <person name="Heidelberg J.F."/>
        </authorList>
    </citation>
    <scope>NUCLEOTIDE SEQUENCE [LARGE SCALE GENOMIC DNA]</scope>
    <source>
        <strain>JA-3-3Ab</strain>
    </source>
</reference>
<comment type="function">
    <text evidence="2">Cell wall formation.</text>
</comment>
<comment type="catalytic activity">
    <reaction evidence="2">
        <text>2 D-alanine + ATP = D-alanyl-D-alanine + ADP + phosphate + H(+)</text>
        <dbReference type="Rhea" id="RHEA:11224"/>
        <dbReference type="ChEBI" id="CHEBI:15378"/>
        <dbReference type="ChEBI" id="CHEBI:30616"/>
        <dbReference type="ChEBI" id="CHEBI:43474"/>
        <dbReference type="ChEBI" id="CHEBI:57416"/>
        <dbReference type="ChEBI" id="CHEBI:57822"/>
        <dbReference type="ChEBI" id="CHEBI:456216"/>
        <dbReference type="EC" id="6.3.2.4"/>
    </reaction>
</comment>
<comment type="cofactor">
    <cofactor evidence="1">
        <name>Mg(2+)</name>
        <dbReference type="ChEBI" id="CHEBI:18420"/>
    </cofactor>
    <cofactor evidence="1">
        <name>Mn(2+)</name>
        <dbReference type="ChEBI" id="CHEBI:29035"/>
    </cofactor>
    <text evidence="1">Binds 2 magnesium or manganese ions per subunit.</text>
</comment>
<comment type="pathway">
    <text evidence="2">Cell wall biogenesis; peptidoglycan biosynthesis.</text>
</comment>
<comment type="subcellular location">
    <subcellularLocation>
        <location evidence="2">Cytoplasm</location>
    </subcellularLocation>
</comment>
<comment type="similarity">
    <text evidence="2">Belongs to the D-alanine--D-alanine ligase family.</text>
</comment>
<protein>
    <recommendedName>
        <fullName evidence="2">D-alanine--D-alanine ligase</fullName>
        <ecNumber evidence="2">6.3.2.4</ecNumber>
    </recommendedName>
    <alternativeName>
        <fullName evidence="2">D-Ala-D-Ala ligase</fullName>
    </alternativeName>
    <alternativeName>
        <fullName evidence="2">D-alanylalanine synthetase</fullName>
    </alternativeName>
</protein>
<name>DDL_SYNJA</name>
<evidence type="ECO:0000250" key="1"/>
<evidence type="ECO:0000255" key="2">
    <source>
        <dbReference type="HAMAP-Rule" id="MF_00047"/>
    </source>
</evidence>
<dbReference type="EC" id="6.3.2.4" evidence="2"/>
<dbReference type="EMBL" id="CP000239">
    <property type="protein sequence ID" value="ABC98340.1"/>
    <property type="molecule type" value="Genomic_DNA"/>
</dbReference>
<dbReference type="RefSeq" id="WP_011429032.1">
    <property type="nucleotide sequence ID" value="NC_007775.1"/>
</dbReference>
<dbReference type="SMR" id="Q2JXY2"/>
<dbReference type="STRING" id="321327.CYA_0110"/>
<dbReference type="KEGG" id="cya:CYA_0110"/>
<dbReference type="eggNOG" id="COG1181">
    <property type="taxonomic scope" value="Bacteria"/>
</dbReference>
<dbReference type="HOGENOM" id="CLU_039268_2_0_3"/>
<dbReference type="OrthoDB" id="9813261at2"/>
<dbReference type="UniPathway" id="UPA00219"/>
<dbReference type="Proteomes" id="UP000008818">
    <property type="component" value="Chromosome"/>
</dbReference>
<dbReference type="GO" id="GO:0005737">
    <property type="term" value="C:cytoplasm"/>
    <property type="evidence" value="ECO:0007669"/>
    <property type="project" value="UniProtKB-SubCell"/>
</dbReference>
<dbReference type="GO" id="GO:0005524">
    <property type="term" value="F:ATP binding"/>
    <property type="evidence" value="ECO:0007669"/>
    <property type="project" value="UniProtKB-KW"/>
</dbReference>
<dbReference type="GO" id="GO:0008716">
    <property type="term" value="F:D-alanine-D-alanine ligase activity"/>
    <property type="evidence" value="ECO:0007669"/>
    <property type="project" value="UniProtKB-UniRule"/>
</dbReference>
<dbReference type="GO" id="GO:0046872">
    <property type="term" value="F:metal ion binding"/>
    <property type="evidence" value="ECO:0007669"/>
    <property type="project" value="UniProtKB-KW"/>
</dbReference>
<dbReference type="GO" id="GO:0071555">
    <property type="term" value="P:cell wall organization"/>
    <property type="evidence" value="ECO:0007669"/>
    <property type="project" value="UniProtKB-KW"/>
</dbReference>
<dbReference type="GO" id="GO:0009252">
    <property type="term" value="P:peptidoglycan biosynthetic process"/>
    <property type="evidence" value="ECO:0007669"/>
    <property type="project" value="UniProtKB-UniRule"/>
</dbReference>
<dbReference type="GO" id="GO:0008360">
    <property type="term" value="P:regulation of cell shape"/>
    <property type="evidence" value="ECO:0007669"/>
    <property type="project" value="UniProtKB-KW"/>
</dbReference>
<dbReference type="Gene3D" id="3.40.50.20">
    <property type="match status" value="1"/>
</dbReference>
<dbReference type="Gene3D" id="3.30.1490.20">
    <property type="entry name" value="ATP-grasp fold, A domain"/>
    <property type="match status" value="1"/>
</dbReference>
<dbReference type="Gene3D" id="3.30.470.20">
    <property type="entry name" value="ATP-grasp fold, B domain"/>
    <property type="match status" value="1"/>
</dbReference>
<dbReference type="HAMAP" id="MF_00047">
    <property type="entry name" value="Dala_Dala_lig"/>
    <property type="match status" value="1"/>
</dbReference>
<dbReference type="InterPro" id="IPR011761">
    <property type="entry name" value="ATP-grasp"/>
</dbReference>
<dbReference type="InterPro" id="IPR013815">
    <property type="entry name" value="ATP_grasp_subdomain_1"/>
</dbReference>
<dbReference type="InterPro" id="IPR000291">
    <property type="entry name" value="D-Ala_lig_Van_CS"/>
</dbReference>
<dbReference type="InterPro" id="IPR005905">
    <property type="entry name" value="D_ala_D_ala"/>
</dbReference>
<dbReference type="InterPro" id="IPR011095">
    <property type="entry name" value="Dala_Dala_lig_C"/>
</dbReference>
<dbReference type="InterPro" id="IPR011127">
    <property type="entry name" value="Dala_Dala_lig_N"/>
</dbReference>
<dbReference type="InterPro" id="IPR016185">
    <property type="entry name" value="PreATP-grasp_dom_sf"/>
</dbReference>
<dbReference type="NCBIfam" id="TIGR01205">
    <property type="entry name" value="D_ala_D_alaTIGR"/>
    <property type="match status" value="1"/>
</dbReference>
<dbReference type="NCBIfam" id="NF002378">
    <property type="entry name" value="PRK01372.1"/>
    <property type="match status" value="1"/>
</dbReference>
<dbReference type="PANTHER" id="PTHR23132">
    <property type="entry name" value="D-ALANINE--D-ALANINE LIGASE"/>
    <property type="match status" value="1"/>
</dbReference>
<dbReference type="PANTHER" id="PTHR23132:SF23">
    <property type="entry name" value="D-ALANINE--D-ALANINE LIGASE B"/>
    <property type="match status" value="1"/>
</dbReference>
<dbReference type="Pfam" id="PF07478">
    <property type="entry name" value="Dala_Dala_lig_C"/>
    <property type="match status" value="1"/>
</dbReference>
<dbReference type="Pfam" id="PF01820">
    <property type="entry name" value="Dala_Dala_lig_N"/>
    <property type="match status" value="1"/>
</dbReference>
<dbReference type="PIRSF" id="PIRSF039102">
    <property type="entry name" value="Ddl/VanB"/>
    <property type="match status" value="1"/>
</dbReference>
<dbReference type="SUPFAM" id="SSF56059">
    <property type="entry name" value="Glutathione synthetase ATP-binding domain-like"/>
    <property type="match status" value="1"/>
</dbReference>
<dbReference type="SUPFAM" id="SSF52440">
    <property type="entry name" value="PreATP-grasp domain"/>
    <property type="match status" value="1"/>
</dbReference>
<dbReference type="PROSITE" id="PS50975">
    <property type="entry name" value="ATP_GRASP"/>
    <property type="match status" value="1"/>
</dbReference>
<dbReference type="PROSITE" id="PS00843">
    <property type="entry name" value="DALA_DALA_LIGASE_1"/>
    <property type="match status" value="1"/>
</dbReference>
<dbReference type="PROSITE" id="PS00844">
    <property type="entry name" value="DALA_DALA_LIGASE_2"/>
    <property type="match status" value="1"/>
</dbReference>
<organism>
    <name type="scientific">Synechococcus sp. (strain JA-3-3Ab)</name>
    <name type="common">Cyanobacteria bacterium Yellowstone A-Prime</name>
    <dbReference type="NCBI Taxonomy" id="321327"/>
    <lineage>
        <taxon>Bacteria</taxon>
        <taxon>Bacillati</taxon>
        <taxon>Cyanobacteriota</taxon>
        <taxon>Cyanophyceae</taxon>
        <taxon>Synechococcales</taxon>
        <taxon>Synechococcaceae</taxon>
        <taxon>Synechococcus</taxon>
    </lineage>
</organism>
<proteinExistence type="inferred from homology"/>
<sequence>MNIVILAGGRSAERQVSLVTGKACKRALEDLGHRAKLIDPEEDLPLRLWQERQAGCDFVWIALHGPGGEDGVVQGMLEWLGLPYQGSGPLASALAMDKLVSKQIFRAEGIPTPEWLVWDEAQPLSWAECVARLGSPLVVKPSNSGSTVGISLARDEVSLAQGLALASSVSSRVFLERYIPGKEITLSILSGQVLPAIEIIPAQGDFYDYEAKYAPGGSRHLIPCSLSAAGLARCEAAGLRAYRVLGCEGLARVDLRVDADENPWVLEVNTLPGMTPTSLCPEAAAALGWTFTELVERMLQDALQRAALTRSAPSGSRPSPQPA</sequence>
<keyword id="KW-0067">ATP-binding</keyword>
<keyword id="KW-0133">Cell shape</keyword>
<keyword id="KW-0961">Cell wall biogenesis/degradation</keyword>
<keyword id="KW-0963">Cytoplasm</keyword>
<keyword id="KW-0436">Ligase</keyword>
<keyword id="KW-0460">Magnesium</keyword>
<keyword id="KW-0464">Manganese</keyword>
<keyword id="KW-0479">Metal-binding</keyword>
<keyword id="KW-0547">Nucleotide-binding</keyword>
<keyword id="KW-0573">Peptidoglycan synthesis</keyword>
<accession>Q2JXY2</accession>
<feature type="chain" id="PRO_1000030509" description="D-alanine--D-alanine ligase">
    <location>
        <begin position="1"/>
        <end position="323"/>
    </location>
</feature>
<feature type="domain" description="ATP-grasp" evidence="2">
    <location>
        <begin position="102"/>
        <end position="300"/>
    </location>
</feature>
<feature type="binding site" evidence="2">
    <location>
        <begin position="130"/>
        <end position="185"/>
    </location>
    <ligand>
        <name>ATP</name>
        <dbReference type="ChEBI" id="CHEBI:30616"/>
    </ligand>
</feature>
<feature type="binding site" evidence="2">
    <location>
        <position position="254"/>
    </location>
    <ligand>
        <name>Mg(2+)</name>
        <dbReference type="ChEBI" id="CHEBI:18420"/>
        <label>1</label>
    </ligand>
</feature>
<feature type="binding site" evidence="2">
    <location>
        <position position="267"/>
    </location>
    <ligand>
        <name>Mg(2+)</name>
        <dbReference type="ChEBI" id="CHEBI:18420"/>
        <label>1</label>
    </ligand>
</feature>
<feature type="binding site" evidence="2">
    <location>
        <position position="267"/>
    </location>
    <ligand>
        <name>Mg(2+)</name>
        <dbReference type="ChEBI" id="CHEBI:18420"/>
        <label>2</label>
    </ligand>
</feature>
<feature type="binding site" evidence="2">
    <location>
        <position position="269"/>
    </location>
    <ligand>
        <name>Mg(2+)</name>
        <dbReference type="ChEBI" id="CHEBI:18420"/>
        <label>2</label>
    </ligand>
</feature>
<gene>
    <name evidence="2" type="primary">ddl</name>
    <name type="ordered locus">CYA_0110</name>
</gene>